<reference key="1">
    <citation type="submission" date="2006-10" db="EMBL/GenBank/DDBJ databases">
        <authorList>
            <person name="Fleischmann R.D."/>
            <person name="Dodson R.J."/>
            <person name="Haft D.H."/>
            <person name="Merkel J.S."/>
            <person name="Nelson W.C."/>
            <person name="Fraser C.M."/>
        </authorList>
    </citation>
    <scope>NUCLEOTIDE SEQUENCE [LARGE SCALE GENOMIC DNA]</scope>
    <source>
        <strain>104</strain>
    </source>
</reference>
<organism>
    <name type="scientific">Mycobacterium avium (strain 104)</name>
    <dbReference type="NCBI Taxonomy" id="243243"/>
    <lineage>
        <taxon>Bacteria</taxon>
        <taxon>Bacillati</taxon>
        <taxon>Actinomycetota</taxon>
        <taxon>Actinomycetes</taxon>
        <taxon>Mycobacteriales</taxon>
        <taxon>Mycobacteriaceae</taxon>
        <taxon>Mycobacterium</taxon>
        <taxon>Mycobacterium avium complex (MAC)</taxon>
    </lineage>
</organism>
<gene>
    <name evidence="1" type="primary">efp</name>
    <name type="ordered locus">MAV_3411</name>
</gene>
<sequence>MASTADFKNGLVLVIDGQLWQIVEFQHVKPGKGPAFVRTKLKNVLSGKVVDKTYNAGVKVETATVDRRDTTYLYRDGSDFVFMDSQDYEQHPLPESLVGDAARFLLEGMPVQVAFHNGSPLYIELPVSVEMEVTHTEPGLQGDRSSAGTKPATVETGAEIQVPLFINTGDKLKVDTRDGSYLGRVNA</sequence>
<accession>A0QI55</accession>
<evidence type="ECO:0000255" key="1">
    <source>
        <dbReference type="HAMAP-Rule" id="MF_00141"/>
    </source>
</evidence>
<name>EFP_MYCA1</name>
<dbReference type="EMBL" id="CP000479">
    <property type="protein sequence ID" value="ABK69249.1"/>
    <property type="molecule type" value="Genomic_DNA"/>
</dbReference>
<dbReference type="RefSeq" id="WP_003872627.1">
    <property type="nucleotide sequence ID" value="NC_008595.1"/>
</dbReference>
<dbReference type="SMR" id="A0QI55"/>
<dbReference type="GeneID" id="75270808"/>
<dbReference type="KEGG" id="mav:MAV_3411"/>
<dbReference type="HOGENOM" id="CLU_074944_0_1_11"/>
<dbReference type="UniPathway" id="UPA00345"/>
<dbReference type="Proteomes" id="UP000001574">
    <property type="component" value="Chromosome"/>
</dbReference>
<dbReference type="GO" id="GO:0005737">
    <property type="term" value="C:cytoplasm"/>
    <property type="evidence" value="ECO:0007669"/>
    <property type="project" value="UniProtKB-SubCell"/>
</dbReference>
<dbReference type="GO" id="GO:0003746">
    <property type="term" value="F:translation elongation factor activity"/>
    <property type="evidence" value="ECO:0007669"/>
    <property type="project" value="UniProtKB-UniRule"/>
</dbReference>
<dbReference type="GO" id="GO:0043043">
    <property type="term" value="P:peptide biosynthetic process"/>
    <property type="evidence" value="ECO:0007669"/>
    <property type="project" value="InterPro"/>
</dbReference>
<dbReference type="CDD" id="cd04470">
    <property type="entry name" value="S1_EF-P_repeat_1"/>
    <property type="match status" value="1"/>
</dbReference>
<dbReference type="CDD" id="cd05794">
    <property type="entry name" value="S1_EF-P_repeat_2"/>
    <property type="match status" value="1"/>
</dbReference>
<dbReference type="FunFam" id="2.30.30.30:FF:000003">
    <property type="entry name" value="Elongation factor P"/>
    <property type="match status" value="1"/>
</dbReference>
<dbReference type="FunFam" id="2.40.50.140:FF:000004">
    <property type="entry name" value="Elongation factor P"/>
    <property type="match status" value="1"/>
</dbReference>
<dbReference type="FunFam" id="2.40.50.140:FF:000009">
    <property type="entry name" value="Elongation factor P"/>
    <property type="match status" value="1"/>
</dbReference>
<dbReference type="Gene3D" id="2.30.30.30">
    <property type="match status" value="1"/>
</dbReference>
<dbReference type="Gene3D" id="2.40.50.140">
    <property type="entry name" value="Nucleic acid-binding proteins"/>
    <property type="match status" value="2"/>
</dbReference>
<dbReference type="HAMAP" id="MF_00141">
    <property type="entry name" value="EF_P"/>
    <property type="match status" value="1"/>
</dbReference>
<dbReference type="InterPro" id="IPR015365">
    <property type="entry name" value="Elong-fact-P_C"/>
</dbReference>
<dbReference type="InterPro" id="IPR012340">
    <property type="entry name" value="NA-bd_OB-fold"/>
</dbReference>
<dbReference type="InterPro" id="IPR014722">
    <property type="entry name" value="Rib_uL2_dom2"/>
</dbReference>
<dbReference type="InterPro" id="IPR020599">
    <property type="entry name" value="Transl_elong_fac_P/YeiP"/>
</dbReference>
<dbReference type="InterPro" id="IPR013185">
    <property type="entry name" value="Transl_elong_KOW-like"/>
</dbReference>
<dbReference type="InterPro" id="IPR001059">
    <property type="entry name" value="Transl_elong_P/YeiP_cen"/>
</dbReference>
<dbReference type="InterPro" id="IPR013852">
    <property type="entry name" value="Transl_elong_P/YeiP_CS"/>
</dbReference>
<dbReference type="InterPro" id="IPR011768">
    <property type="entry name" value="Transl_elongation_fac_P"/>
</dbReference>
<dbReference type="InterPro" id="IPR008991">
    <property type="entry name" value="Translation_prot_SH3-like_sf"/>
</dbReference>
<dbReference type="NCBIfam" id="TIGR00038">
    <property type="entry name" value="efp"/>
    <property type="match status" value="1"/>
</dbReference>
<dbReference type="NCBIfam" id="NF001810">
    <property type="entry name" value="PRK00529.1"/>
    <property type="match status" value="1"/>
</dbReference>
<dbReference type="PANTHER" id="PTHR30053">
    <property type="entry name" value="ELONGATION FACTOR P"/>
    <property type="match status" value="1"/>
</dbReference>
<dbReference type="PANTHER" id="PTHR30053:SF12">
    <property type="entry name" value="ELONGATION FACTOR P (EF-P) FAMILY PROTEIN"/>
    <property type="match status" value="1"/>
</dbReference>
<dbReference type="Pfam" id="PF01132">
    <property type="entry name" value="EFP"/>
    <property type="match status" value="1"/>
</dbReference>
<dbReference type="Pfam" id="PF08207">
    <property type="entry name" value="EFP_N"/>
    <property type="match status" value="1"/>
</dbReference>
<dbReference type="Pfam" id="PF09285">
    <property type="entry name" value="Elong-fact-P_C"/>
    <property type="match status" value="1"/>
</dbReference>
<dbReference type="PIRSF" id="PIRSF005901">
    <property type="entry name" value="EF-P"/>
    <property type="match status" value="1"/>
</dbReference>
<dbReference type="SMART" id="SM01185">
    <property type="entry name" value="EFP"/>
    <property type="match status" value="1"/>
</dbReference>
<dbReference type="SMART" id="SM00841">
    <property type="entry name" value="Elong-fact-P_C"/>
    <property type="match status" value="1"/>
</dbReference>
<dbReference type="SUPFAM" id="SSF50249">
    <property type="entry name" value="Nucleic acid-binding proteins"/>
    <property type="match status" value="2"/>
</dbReference>
<dbReference type="SUPFAM" id="SSF50104">
    <property type="entry name" value="Translation proteins SH3-like domain"/>
    <property type="match status" value="1"/>
</dbReference>
<dbReference type="PROSITE" id="PS01275">
    <property type="entry name" value="EFP"/>
    <property type="match status" value="1"/>
</dbReference>
<keyword id="KW-0963">Cytoplasm</keyword>
<keyword id="KW-0251">Elongation factor</keyword>
<keyword id="KW-0648">Protein biosynthesis</keyword>
<proteinExistence type="inferred from homology"/>
<feature type="chain" id="PRO_1000010778" description="Elongation factor P">
    <location>
        <begin position="1"/>
        <end position="187"/>
    </location>
</feature>
<protein>
    <recommendedName>
        <fullName evidence="1">Elongation factor P</fullName>
        <shortName evidence="1">EF-P</shortName>
    </recommendedName>
</protein>
<comment type="function">
    <text evidence="1">Involved in peptide bond synthesis. Stimulates efficient translation and peptide-bond synthesis on native or reconstituted 70S ribosomes in vitro. Probably functions indirectly by altering the affinity of the ribosome for aminoacyl-tRNA, thus increasing their reactivity as acceptors for peptidyl transferase.</text>
</comment>
<comment type="pathway">
    <text evidence="1">Protein biosynthesis; polypeptide chain elongation.</text>
</comment>
<comment type="subcellular location">
    <subcellularLocation>
        <location evidence="1">Cytoplasm</location>
    </subcellularLocation>
</comment>
<comment type="similarity">
    <text evidence="1">Belongs to the elongation factor P family.</text>
</comment>